<organism>
    <name type="scientific">Streptococcus pyogenes serotype M6 (strain ATCC BAA-946 / MGAS10394)</name>
    <dbReference type="NCBI Taxonomy" id="286636"/>
    <lineage>
        <taxon>Bacteria</taxon>
        <taxon>Bacillati</taxon>
        <taxon>Bacillota</taxon>
        <taxon>Bacilli</taxon>
        <taxon>Lactobacillales</taxon>
        <taxon>Streptococcaceae</taxon>
        <taxon>Streptococcus</taxon>
    </lineage>
</organism>
<protein>
    <recommendedName>
        <fullName evidence="1">Glutamate racemase</fullName>
        <ecNumber evidence="1">5.1.1.3</ecNumber>
    </recommendedName>
</protein>
<gene>
    <name evidence="1" type="primary">murI</name>
    <name type="ordered locus">M6_Spy0329</name>
</gene>
<comment type="function">
    <text evidence="1">Provides the (R)-glutamate required for cell wall biosynthesis.</text>
</comment>
<comment type="catalytic activity">
    <reaction evidence="1">
        <text>L-glutamate = D-glutamate</text>
        <dbReference type="Rhea" id="RHEA:12813"/>
        <dbReference type="ChEBI" id="CHEBI:29985"/>
        <dbReference type="ChEBI" id="CHEBI:29986"/>
        <dbReference type="EC" id="5.1.1.3"/>
    </reaction>
</comment>
<comment type="pathway">
    <text evidence="1">Cell wall biogenesis; peptidoglycan biosynthesis.</text>
</comment>
<comment type="similarity">
    <text evidence="1">Belongs to the aspartate/glutamate racemases family.</text>
</comment>
<reference key="1">
    <citation type="journal article" date="2004" name="J. Infect. Dis.">
        <title>Progress toward characterization of the group A Streptococcus metagenome: complete genome sequence of a macrolide-resistant serotype M6 strain.</title>
        <authorList>
            <person name="Banks D.J."/>
            <person name="Porcella S.F."/>
            <person name="Barbian K.D."/>
            <person name="Beres S.B."/>
            <person name="Philips L.E."/>
            <person name="Voyich J.M."/>
            <person name="DeLeo F.R."/>
            <person name="Martin J.M."/>
            <person name="Somerville G.A."/>
            <person name="Musser J.M."/>
        </authorList>
    </citation>
    <scope>NUCLEOTIDE SEQUENCE [LARGE SCALE GENOMIC DNA]</scope>
    <source>
        <strain>ATCC BAA-946 / MGAS10394</strain>
    </source>
</reference>
<sequence>MDTRPIGFLDSGVGGLTVVCELIRQLPHEKIVYIGDSARAPYGPRPKKQIKEYTWELVNFLLTQNVKMIVFACNTATAVAWEEVKATLDIPVLGVVLPGASAAIKSTTKGQVGVIGTPMTVASDIYRKKIQLLAPSVQVRSLACPKFVPIVESNEMCSSIAKKIVYDSLSPLVGKIDTLVLGCTHYPLLRPIIQNVMGPSVKLIDSGAECVRDISVLLNYFDINGNYHQKAVEHRFFTTANPEIFQEIASIWLKQKINVEHVTL</sequence>
<evidence type="ECO:0000255" key="1">
    <source>
        <dbReference type="HAMAP-Rule" id="MF_00258"/>
    </source>
</evidence>
<feature type="chain" id="PRO_0000095523" description="Glutamate racemase">
    <location>
        <begin position="1"/>
        <end position="264"/>
    </location>
</feature>
<feature type="active site" description="Proton donor/acceptor" evidence="1">
    <location>
        <position position="73"/>
    </location>
</feature>
<feature type="active site" description="Proton donor/acceptor" evidence="1">
    <location>
        <position position="183"/>
    </location>
</feature>
<feature type="binding site" evidence="1">
    <location>
        <begin position="10"/>
        <end position="11"/>
    </location>
    <ligand>
        <name>substrate</name>
    </ligand>
</feature>
<feature type="binding site" evidence="1">
    <location>
        <begin position="42"/>
        <end position="43"/>
    </location>
    <ligand>
        <name>substrate</name>
    </ligand>
</feature>
<feature type="binding site" evidence="1">
    <location>
        <begin position="74"/>
        <end position="75"/>
    </location>
    <ligand>
        <name>substrate</name>
    </ligand>
</feature>
<feature type="binding site" evidence="1">
    <location>
        <begin position="184"/>
        <end position="185"/>
    </location>
    <ligand>
        <name>substrate</name>
    </ligand>
</feature>
<dbReference type="EC" id="5.1.1.3" evidence="1"/>
<dbReference type="EMBL" id="CP000003">
    <property type="protein sequence ID" value="AAT86464.1"/>
    <property type="molecule type" value="Genomic_DNA"/>
</dbReference>
<dbReference type="SMR" id="Q5XDP9"/>
<dbReference type="KEGG" id="spa:M6_Spy0329"/>
<dbReference type="HOGENOM" id="CLU_052344_0_2_9"/>
<dbReference type="UniPathway" id="UPA00219"/>
<dbReference type="Proteomes" id="UP000001167">
    <property type="component" value="Chromosome"/>
</dbReference>
<dbReference type="GO" id="GO:0008881">
    <property type="term" value="F:glutamate racemase activity"/>
    <property type="evidence" value="ECO:0007669"/>
    <property type="project" value="UniProtKB-UniRule"/>
</dbReference>
<dbReference type="GO" id="GO:0071555">
    <property type="term" value="P:cell wall organization"/>
    <property type="evidence" value="ECO:0007669"/>
    <property type="project" value="UniProtKB-KW"/>
</dbReference>
<dbReference type="GO" id="GO:0009252">
    <property type="term" value="P:peptidoglycan biosynthetic process"/>
    <property type="evidence" value="ECO:0007669"/>
    <property type="project" value="UniProtKB-UniRule"/>
</dbReference>
<dbReference type="GO" id="GO:0008360">
    <property type="term" value="P:regulation of cell shape"/>
    <property type="evidence" value="ECO:0007669"/>
    <property type="project" value="UniProtKB-KW"/>
</dbReference>
<dbReference type="FunFam" id="3.40.50.1860:FF:000002">
    <property type="entry name" value="Glutamate racemase"/>
    <property type="match status" value="1"/>
</dbReference>
<dbReference type="Gene3D" id="3.40.50.1860">
    <property type="match status" value="2"/>
</dbReference>
<dbReference type="HAMAP" id="MF_00258">
    <property type="entry name" value="Glu_racemase"/>
    <property type="match status" value="1"/>
</dbReference>
<dbReference type="InterPro" id="IPR015942">
    <property type="entry name" value="Asp/Glu/hydantoin_racemase"/>
</dbReference>
<dbReference type="InterPro" id="IPR001920">
    <property type="entry name" value="Asp/Glu_race"/>
</dbReference>
<dbReference type="InterPro" id="IPR033134">
    <property type="entry name" value="Asp/Glu_racemase_AS_2"/>
</dbReference>
<dbReference type="InterPro" id="IPR004391">
    <property type="entry name" value="Glu_race"/>
</dbReference>
<dbReference type="NCBIfam" id="TIGR00067">
    <property type="entry name" value="glut_race"/>
    <property type="match status" value="1"/>
</dbReference>
<dbReference type="NCBIfam" id="NF002035">
    <property type="entry name" value="PRK00865.1-3"/>
    <property type="match status" value="1"/>
</dbReference>
<dbReference type="PANTHER" id="PTHR21198">
    <property type="entry name" value="GLUTAMATE RACEMASE"/>
    <property type="match status" value="1"/>
</dbReference>
<dbReference type="PANTHER" id="PTHR21198:SF2">
    <property type="entry name" value="GLUTAMATE RACEMASE"/>
    <property type="match status" value="1"/>
</dbReference>
<dbReference type="Pfam" id="PF01177">
    <property type="entry name" value="Asp_Glu_race"/>
    <property type="match status" value="1"/>
</dbReference>
<dbReference type="SUPFAM" id="SSF53681">
    <property type="entry name" value="Aspartate/glutamate racemase"/>
    <property type="match status" value="2"/>
</dbReference>
<dbReference type="PROSITE" id="PS00924">
    <property type="entry name" value="ASP_GLU_RACEMASE_2"/>
    <property type="match status" value="1"/>
</dbReference>
<name>MURI_STRP6</name>
<proteinExistence type="inferred from homology"/>
<keyword id="KW-0133">Cell shape</keyword>
<keyword id="KW-0961">Cell wall biogenesis/degradation</keyword>
<keyword id="KW-0413">Isomerase</keyword>
<keyword id="KW-0573">Peptidoglycan synthesis</keyword>
<accession>Q5XDP9</accession>